<keyword id="KW-0002">3D-structure</keyword>
<keyword id="KW-0012">Acyltransferase</keyword>
<keyword id="KW-0808">Transferase</keyword>
<name>FDB2_GIBMO</name>
<organism>
    <name type="scientific">Gibberella moniliformis</name>
    <name type="common">Maize ear and stalk rot fungus</name>
    <name type="synonym">Fusarium verticillioides</name>
    <dbReference type="NCBI Taxonomy" id="117187"/>
    <lineage>
        <taxon>Eukaryota</taxon>
        <taxon>Fungi</taxon>
        <taxon>Dikarya</taxon>
        <taxon>Ascomycota</taxon>
        <taxon>Pezizomycotina</taxon>
        <taxon>Sordariomycetes</taxon>
        <taxon>Hypocreomycetidae</taxon>
        <taxon>Hypocreales</taxon>
        <taxon>Nectriaceae</taxon>
        <taxon>Fusarium</taxon>
        <taxon>Fusarium fujikuroi species complex</taxon>
    </lineage>
</organism>
<dbReference type="EC" id="2.3.1.-" evidence="4"/>
<dbReference type="EMBL" id="EU552489">
    <property type="protein sequence ID" value="ACD88491.1"/>
    <property type="molecule type" value="Genomic_DNA"/>
</dbReference>
<dbReference type="EMBL" id="FN687904">
    <property type="protein sequence ID" value="CBK52381.1"/>
    <property type="molecule type" value="mRNA"/>
</dbReference>
<dbReference type="EMBL" id="BN001430">
    <property type="protein sequence ID" value="CBL43336.1"/>
    <property type="molecule type" value="Genomic_DNA"/>
</dbReference>
<dbReference type="EMBL" id="QJUS01000105">
    <property type="protein sequence ID" value="RBQ97400.1"/>
    <property type="molecule type" value="Genomic_DNA"/>
</dbReference>
<dbReference type="EMBL" id="QKXB01000334">
    <property type="protein sequence ID" value="RBR06778.1"/>
    <property type="molecule type" value="Genomic_DNA"/>
</dbReference>
<dbReference type="PDB" id="7QI3">
    <property type="method" value="X-ray"/>
    <property type="resolution" value="1.80 A"/>
    <property type="chains" value="A/B/C/D=1-344"/>
</dbReference>
<dbReference type="PDBsum" id="7QI3"/>
<dbReference type="SMR" id="B7SP66"/>
<dbReference type="OMA" id="ELHYSAH"/>
<dbReference type="GO" id="GO:0004060">
    <property type="term" value="F:arylamine N-acetyltransferase activity"/>
    <property type="evidence" value="ECO:0007669"/>
    <property type="project" value="UniProtKB-EC"/>
</dbReference>
<dbReference type="Gene3D" id="3.30.2140.20">
    <property type="match status" value="1"/>
</dbReference>
<dbReference type="InterPro" id="IPR001447">
    <property type="entry name" value="Arylamine_N-AcTrfase"/>
</dbReference>
<dbReference type="InterPro" id="IPR053710">
    <property type="entry name" value="Arylamine_NAT_domain_sf"/>
</dbReference>
<dbReference type="InterPro" id="IPR038765">
    <property type="entry name" value="Papain-like_cys_pep_sf"/>
</dbReference>
<dbReference type="PANTHER" id="PTHR11786:SF0">
    <property type="entry name" value="ARYLAMINE N-ACETYLTRANSFERASE 4-RELATED"/>
    <property type="match status" value="1"/>
</dbReference>
<dbReference type="PANTHER" id="PTHR11786">
    <property type="entry name" value="N-HYDROXYARYLAMINE O-ACETYLTRANSFERASE"/>
    <property type="match status" value="1"/>
</dbReference>
<dbReference type="Pfam" id="PF00797">
    <property type="entry name" value="Acetyltransf_2"/>
    <property type="match status" value="1"/>
</dbReference>
<dbReference type="PRINTS" id="PR01543">
    <property type="entry name" value="ANATRNSFRASE"/>
</dbReference>
<dbReference type="SUPFAM" id="SSF54001">
    <property type="entry name" value="Cysteine proteinases"/>
    <property type="match status" value="1"/>
</dbReference>
<reference key="1">
    <citation type="journal article" date="2009" name="J. Appl. Microbiol.">
        <title>FDB2 encodes a member of the arylamine N-acetyltransferase family and is necessary for biotransformation of benzoxazolinones by Fusarium verticillioides.</title>
        <authorList>
            <person name="Glenn A.E."/>
            <person name="Bacon C.W."/>
        </authorList>
    </citation>
    <scope>NUCLEOTIDE SEQUENCE [GENOMIC DNA]</scope>
    <scope>FUNCTION</scope>
    <scope>DISRUPTION PHENOTYPE</scope>
    <scope>INDUCTION</scope>
    <scope>PATHWAY</scope>
</reference>
<reference key="2">
    <citation type="journal article" date="2010" name="FEBS Lett.">
        <title>Comparative genomic and phylogenetic investigation of the xenobiotic metabolizing arylamine N-acetyltransferase enzyme family.</title>
        <authorList>
            <person name="Glenn A.E."/>
            <person name="Karagianni E.P."/>
            <person name="Ulndreaj A."/>
            <person name="Boukouvala S."/>
        </authorList>
    </citation>
    <scope>NUCLEOTIDE SEQUENCE [MRNA]</scope>
</reference>
<reference key="3">
    <citation type="submission" date="2010-03" db="EMBL/GenBank/DDBJ databases">
        <title>Genes for xenobiotic metabolising enzymes in fungi: The family of arylamine N-acetyltransferases (NATs).</title>
        <authorList>
            <person name="Karagianni E.P."/>
            <person name="Ormiston B."/>
            <person name="Ouldreou A."/>
            <person name="Glenn A.E."/>
            <person name="Boukouvala S."/>
        </authorList>
    </citation>
    <scope>NUCLEOTIDE SEQUENCE [GENOMIC DNA]</scope>
    <source>
        <strain>M3125 / FGSC 7600</strain>
    </source>
</reference>
<reference key="4">
    <citation type="submission" date="2018-06" db="EMBL/GenBank/DDBJ databases">
        <title>Genome of an Australian isolate of Fusarium verticillioides BRIP53263.</title>
        <authorList>
            <person name="Gardiner D."/>
        </authorList>
    </citation>
    <scope>NUCLEOTIDE SEQUENCE [LARGE SCALE GENOMIC DNA]</scope>
    <source>
        <strain>BRIP53263</strain>
    </source>
</reference>
<reference key="5">
    <citation type="journal article" date="2002" name="Mol. Plant Microbe Interact.">
        <title>Fdb1 and Fdb2, Fusarium verticillioides loci necessary for detoxification of preformed antimicrobials from corn.</title>
        <authorList>
            <person name="Glenn A.E."/>
            <person name="Gold S.E."/>
            <person name="Bacon C.W."/>
        </authorList>
    </citation>
    <scope>FUNCTION</scope>
</reference>
<reference key="6">
    <citation type="journal article" date="2003" name="Appl. Environ. Microbiol.">
        <title>Identification of intermediate and branch metabolites resulting from biotransformation of 2-benzoxazolinone by Fusarium verticillioides.</title>
        <authorList>
            <person name="Glenn A.E."/>
            <person name="Meredith F.I."/>
            <person name="Morrison W.H. III"/>
            <person name="Bacon C.W."/>
        </authorList>
    </citation>
    <scope>FUNCTION</scope>
</reference>
<reference key="7">
    <citation type="journal article" date="2016" name="PLoS ONE">
        <title>Two horizontally transferred xenobiotic resistance gene clusters associated with detoxification of benzoxazolinones by Fusarium species.</title>
        <authorList>
            <person name="Glenn A.E."/>
            <person name="Davis C.B."/>
            <person name="Gao M."/>
            <person name="Gold S.E."/>
            <person name="Mitchell T.R."/>
            <person name="Proctor R.H."/>
            <person name="Stewart J.E."/>
            <person name="Snook M.E."/>
        </authorList>
    </citation>
    <scope>FUNCTION</scope>
</reference>
<accession>B7SP66</accession>
<comment type="function">
    <text evidence="2 3 4 5 8">N-malonyltransferase; part of the Fusarium detoxification of benzoxazolinone cluster 2 (FDB2) involved in the degradation of benzoxazolinones produced by the host plant (PubMed:19302487, PubMed:26808652). Maize, wheat, and rye produce the 2 benzoxazinone phytoanticipins 2,4-dihy-droxy-7-methoxy-1,4-benzoxazin-3-one (DIMBOA) and 2,4-dihydroxy-1,4-benzoxazin-3-one (DIBOA) that, due to their inherent instability once released, spontaneously degrade to the more stable corresponding benzoxazolinones, 6-methoxy-2-benzoxazolinone (MBOA) and 2-benzoxazolinone (BOA), respectively (PubMed:11876429). The first step in the detoxification of benzoxazolinones involves the hydrolysis of the cyclic ester bond of benzoxazolinones by the FDB1 cluster gamma-lactamase MBL1 to aminophenols (PubMed:12788712, PubMed:26808652). MBL1 is able to convert BOA into 2-aminophenol (2-AP), as well as MBOA into 5-methoxy-2-aminophenol (2-AMP) (PubMed:12788712, PubMed:26808652). The FDB2 cluster N-malonyltransferase FDB2/NAT1 then metabolizes aminophenols via N-malonylation to non-toxic malonamic acids (PubMed:12788712, PubMed:19302487). FDB2/NAT1 converts 2-AP into N-(2-hydroxyphenyl) malonamic acid (HPMA) and 2-AMP into N-(2-hydroxy-4-methoxyphenyl) malonamic acid (HMPMA) (PubMed:12788712, PubMed:19302487). The duplicated dienlactone hydrolases DLH1 and DLH2 may provide redundant function for hydrolyzing the lactone moiety in the BOA molecule (Probable). The roles of the amidases an other enzymes encoded by the 2 FDB clusters have not been identified so far (Probable).</text>
</comment>
<comment type="pathway">
    <text evidence="4">Xenobiotic degradation.</text>
</comment>
<comment type="induction">
    <text evidence="4">Expression is induced in response to 2-benzoxasolinone (BOA) exposure.</text>
</comment>
<comment type="disruption phenotype">
    <text evidence="4">Eliminates the ability to metabolize BOA.</text>
</comment>
<comment type="miscellaneous">
    <text evidence="8">Fusarium verticillioides possesses 2 unlinked loci, FDB1 and FDB2, necessary for detoxification of antimicrobial compounds produced by maize, including 2-benzoxazolinone (BOA) (Probable). The FDB2 cluster arose as a duplication of the FDB1 cluster with rearrangement and expansion by incorporating additional genes (Probable).</text>
</comment>
<comment type="similarity">
    <text evidence="7">Belongs to the arylamine N-acetyltransferase family.</text>
</comment>
<proteinExistence type="evidence at protein level"/>
<gene>
    <name evidence="6" type="primary">FDB2</name>
    <name evidence="6" type="synonym">NAT1</name>
    <name type="ORF">FVEG_12636</name>
    <name type="ORF">FVER53263_12636</name>
    <name type="ORF">FVER53590_12636</name>
</gene>
<protein>
    <recommendedName>
        <fullName evidence="6">N-malonyltransferase FDB2</fullName>
        <ecNumber evidence="4">2.3.1.-</ecNumber>
    </recommendedName>
    <alternativeName>
        <fullName evidence="6">Fusarium detoxification of benzoxazolinone cluster 2 protein NAT1</fullName>
        <shortName evidence="6">FDB2 cluster protein NAT1</shortName>
    </alternativeName>
</protein>
<sequence>MARLEDPTALTQLPDESARVRYTSSELQDYFETLKFPQRFLDLGNSVLKDPSLARTKENGLPLLQAITRYHTCNVPFENLVLHYDPHKIVTLDPAELYTKIVTRRRGGRCMENNIFLGTALRSLGYEVRNCGGRVSRAMSPYPEVRKNQSATYDGWNHMLLLVFLGDEWYGVDVGMGSMGPNLPFPLQDGFESLSIAPREIRIQKRSISETHATGPSHATKMWCYDVCYNPAESKKTWTPVYCFTETEFLPQDYEVMSWFTSTNPRSFFTRYITCTKMIMDEDKEVIIGNLTLFKDTVRETIGSDRKVVKKFETEEERIKGLVEIFDVNLTEEEKNSLPQEKRLA</sequence>
<evidence type="ECO:0000250" key="1">
    <source>
        <dbReference type="UniProtKB" id="P9WJI5"/>
    </source>
</evidence>
<evidence type="ECO:0000269" key="2">
    <source>
    </source>
</evidence>
<evidence type="ECO:0000269" key="3">
    <source>
    </source>
</evidence>
<evidence type="ECO:0000269" key="4">
    <source>
    </source>
</evidence>
<evidence type="ECO:0000269" key="5">
    <source>
    </source>
</evidence>
<evidence type="ECO:0000303" key="6">
    <source>
    </source>
</evidence>
<evidence type="ECO:0000305" key="7"/>
<evidence type="ECO:0000305" key="8">
    <source>
    </source>
</evidence>
<evidence type="ECO:0007829" key="9">
    <source>
        <dbReference type="PDB" id="7QI3"/>
    </source>
</evidence>
<feature type="chain" id="PRO_0000454596" description="N-malonyltransferase FDB2">
    <location>
        <begin position="1"/>
        <end position="345"/>
    </location>
</feature>
<feature type="active site" description="Acyl-thioester intermediate" evidence="1">
    <location>
        <position position="110"/>
    </location>
</feature>
<feature type="active site" description="Proton acceptor" evidence="1">
    <location>
        <position position="158"/>
    </location>
</feature>
<feature type="active site" evidence="1">
    <location>
        <position position="173"/>
    </location>
</feature>
<feature type="helix" evidence="9">
    <location>
        <begin position="16"/>
        <end position="18"/>
    </location>
</feature>
<feature type="helix" evidence="9">
    <location>
        <begin position="24"/>
        <end position="33"/>
    </location>
</feature>
<feature type="helix" evidence="9">
    <location>
        <begin position="38"/>
        <end position="49"/>
    </location>
</feature>
<feature type="helix" evidence="9">
    <location>
        <begin position="51"/>
        <end position="55"/>
    </location>
</feature>
<feature type="helix" evidence="9">
    <location>
        <begin position="57"/>
        <end position="74"/>
    </location>
</feature>
<feature type="helix" evidence="9">
    <location>
        <begin position="80"/>
        <end position="82"/>
    </location>
</feature>
<feature type="strand" evidence="9">
    <location>
        <begin position="84"/>
        <end position="87"/>
    </location>
</feature>
<feature type="helix" evidence="9">
    <location>
        <begin position="94"/>
        <end position="101"/>
    </location>
</feature>
<feature type="helix" evidence="9">
    <location>
        <begin position="110"/>
        <end position="124"/>
    </location>
</feature>
<feature type="strand" evidence="9">
    <location>
        <begin position="127"/>
        <end position="136"/>
    </location>
</feature>
<feature type="helix" evidence="9">
    <location>
        <begin position="137"/>
        <end position="139"/>
    </location>
</feature>
<feature type="helix" evidence="9">
    <location>
        <begin position="143"/>
        <end position="149"/>
    </location>
</feature>
<feature type="strand" evidence="9">
    <location>
        <begin position="158"/>
        <end position="165"/>
    </location>
</feature>
<feature type="strand" evidence="9">
    <location>
        <begin position="168"/>
        <end position="172"/>
    </location>
</feature>
<feature type="helix" evidence="9">
    <location>
        <begin position="177"/>
        <end position="179"/>
    </location>
</feature>
<feature type="strand" evidence="9">
    <location>
        <begin position="192"/>
        <end position="194"/>
    </location>
</feature>
<feature type="strand" evidence="9">
    <location>
        <begin position="200"/>
        <end position="206"/>
    </location>
</feature>
<feature type="helix" evidence="9">
    <location>
        <begin position="216"/>
        <end position="218"/>
    </location>
</feature>
<feature type="strand" evidence="9">
    <location>
        <begin position="222"/>
        <end position="229"/>
    </location>
</feature>
<feature type="strand" evidence="9">
    <location>
        <begin position="233"/>
        <end position="235"/>
    </location>
</feature>
<feature type="strand" evidence="9">
    <location>
        <begin position="239"/>
        <end position="244"/>
    </location>
</feature>
<feature type="helix" evidence="9">
    <location>
        <begin position="251"/>
        <end position="263"/>
    </location>
</feature>
<feature type="helix" evidence="9">
    <location>
        <begin position="268"/>
        <end position="270"/>
    </location>
</feature>
<feature type="strand" evidence="9">
    <location>
        <begin position="274"/>
        <end position="281"/>
    </location>
</feature>
<feature type="turn" evidence="9">
    <location>
        <begin position="282"/>
        <end position="285"/>
    </location>
</feature>
<feature type="strand" evidence="9">
    <location>
        <begin position="286"/>
        <end position="294"/>
    </location>
</feature>
<feature type="strand" evidence="9">
    <location>
        <begin position="297"/>
        <end position="302"/>
    </location>
</feature>
<feature type="strand" evidence="9">
    <location>
        <begin position="305"/>
        <end position="311"/>
    </location>
</feature>
<feature type="helix" evidence="9">
    <location>
        <begin position="315"/>
        <end position="326"/>
    </location>
</feature>
<feature type="helix" evidence="9">
    <location>
        <begin position="332"/>
        <end position="336"/>
    </location>
</feature>
<feature type="helix" evidence="9">
    <location>
        <begin position="340"/>
        <end position="342"/>
    </location>
</feature>